<reference key="1">
    <citation type="journal article" date="2010" name="ISME J.">
        <title>The complete genome sequence of the algal symbiont Dinoroseobacter shibae: a hitchhiker's guide to life in the sea.</title>
        <authorList>
            <person name="Wagner-Dobler I."/>
            <person name="Ballhausen B."/>
            <person name="Berger M."/>
            <person name="Brinkhoff T."/>
            <person name="Buchholz I."/>
            <person name="Bunk B."/>
            <person name="Cypionka H."/>
            <person name="Daniel R."/>
            <person name="Drepper T."/>
            <person name="Gerdts G."/>
            <person name="Hahnke S."/>
            <person name="Han C."/>
            <person name="Jahn D."/>
            <person name="Kalhoefer D."/>
            <person name="Kiss H."/>
            <person name="Klenk H.P."/>
            <person name="Kyrpides N."/>
            <person name="Liebl W."/>
            <person name="Liesegang H."/>
            <person name="Meincke L."/>
            <person name="Pati A."/>
            <person name="Petersen J."/>
            <person name="Piekarski T."/>
            <person name="Pommerenke C."/>
            <person name="Pradella S."/>
            <person name="Pukall R."/>
            <person name="Rabus R."/>
            <person name="Stackebrandt E."/>
            <person name="Thole S."/>
            <person name="Thompson L."/>
            <person name="Tielen P."/>
            <person name="Tomasch J."/>
            <person name="von Jan M."/>
            <person name="Wanphrut N."/>
            <person name="Wichels A."/>
            <person name="Zech H."/>
            <person name="Simon M."/>
        </authorList>
    </citation>
    <scope>NUCLEOTIDE SEQUENCE [LARGE SCALE GENOMIC DNA]</scope>
    <source>
        <strain>DSM 16493 / NCIMB 14021 / DFL 12</strain>
    </source>
</reference>
<accession>A8LLY9</accession>
<feature type="signal peptide" description="Tat-type signal" evidence="1">
    <location>
        <begin position="1"/>
        <end position="35"/>
    </location>
</feature>
<feature type="chain" id="PRO_0000335805" description="Periplasmic nitrate reductase" evidence="1">
    <location>
        <begin position="36"/>
        <end position="831"/>
    </location>
</feature>
<feature type="domain" description="4Fe-4S Mo/W bis-MGD-type" evidence="1">
    <location>
        <begin position="42"/>
        <end position="98"/>
    </location>
</feature>
<feature type="binding site" evidence="1">
    <location>
        <position position="49"/>
    </location>
    <ligand>
        <name>[4Fe-4S] cluster</name>
        <dbReference type="ChEBI" id="CHEBI:49883"/>
    </ligand>
</feature>
<feature type="binding site" evidence="1">
    <location>
        <position position="52"/>
    </location>
    <ligand>
        <name>[4Fe-4S] cluster</name>
        <dbReference type="ChEBI" id="CHEBI:49883"/>
    </ligand>
</feature>
<feature type="binding site" evidence="1">
    <location>
        <position position="56"/>
    </location>
    <ligand>
        <name>[4Fe-4S] cluster</name>
        <dbReference type="ChEBI" id="CHEBI:49883"/>
    </ligand>
</feature>
<feature type="binding site" evidence="1">
    <location>
        <position position="84"/>
    </location>
    <ligand>
        <name>[4Fe-4S] cluster</name>
        <dbReference type="ChEBI" id="CHEBI:49883"/>
    </ligand>
</feature>
<feature type="binding site" evidence="1">
    <location>
        <position position="86"/>
    </location>
    <ligand>
        <name>Mo-bis(molybdopterin guanine dinucleotide)</name>
        <dbReference type="ChEBI" id="CHEBI:60539"/>
    </ligand>
</feature>
<feature type="binding site" evidence="1">
    <location>
        <position position="153"/>
    </location>
    <ligand>
        <name>Mo-bis(molybdopterin guanine dinucleotide)</name>
        <dbReference type="ChEBI" id="CHEBI:60539"/>
    </ligand>
</feature>
<feature type="binding site" evidence="1">
    <location>
        <position position="178"/>
    </location>
    <ligand>
        <name>Mo-bis(molybdopterin guanine dinucleotide)</name>
        <dbReference type="ChEBI" id="CHEBI:60539"/>
    </ligand>
</feature>
<feature type="binding site" evidence="1">
    <location>
        <position position="182"/>
    </location>
    <ligand>
        <name>Mo-bis(molybdopterin guanine dinucleotide)</name>
        <dbReference type="ChEBI" id="CHEBI:60539"/>
    </ligand>
</feature>
<feature type="binding site" evidence="1">
    <location>
        <begin position="215"/>
        <end position="222"/>
    </location>
    <ligand>
        <name>Mo-bis(molybdopterin guanine dinucleotide)</name>
        <dbReference type="ChEBI" id="CHEBI:60539"/>
    </ligand>
</feature>
<feature type="binding site" evidence="1">
    <location>
        <begin position="246"/>
        <end position="250"/>
    </location>
    <ligand>
        <name>Mo-bis(molybdopterin guanine dinucleotide)</name>
        <dbReference type="ChEBI" id="CHEBI:60539"/>
    </ligand>
</feature>
<feature type="binding site" evidence="1">
    <location>
        <begin position="265"/>
        <end position="267"/>
    </location>
    <ligand>
        <name>Mo-bis(molybdopterin guanine dinucleotide)</name>
        <dbReference type="ChEBI" id="CHEBI:60539"/>
    </ligand>
</feature>
<feature type="binding site" evidence="1">
    <location>
        <position position="375"/>
    </location>
    <ligand>
        <name>Mo-bis(molybdopterin guanine dinucleotide)</name>
        <dbReference type="ChEBI" id="CHEBI:60539"/>
    </ligand>
</feature>
<feature type="binding site" evidence="1">
    <location>
        <position position="379"/>
    </location>
    <ligand>
        <name>Mo-bis(molybdopterin guanine dinucleotide)</name>
        <dbReference type="ChEBI" id="CHEBI:60539"/>
    </ligand>
</feature>
<feature type="binding site" evidence="1">
    <location>
        <position position="485"/>
    </location>
    <ligand>
        <name>Mo-bis(molybdopterin guanine dinucleotide)</name>
        <dbReference type="ChEBI" id="CHEBI:60539"/>
    </ligand>
</feature>
<feature type="binding site" evidence="1">
    <location>
        <begin position="511"/>
        <end position="512"/>
    </location>
    <ligand>
        <name>Mo-bis(molybdopterin guanine dinucleotide)</name>
        <dbReference type="ChEBI" id="CHEBI:60539"/>
    </ligand>
</feature>
<feature type="binding site" evidence="1">
    <location>
        <position position="534"/>
    </location>
    <ligand>
        <name>Mo-bis(molybdopterin guanine dinucleotide)</name>
        <dbReference type="ChEBI" id="CHEBI:60539"/>
    </ligand>
</feature>
<feature type="binding site" evidence="1">
    <location>
        <position position="561"/>
    </location>
    <ligand>
        <name>Mo-bis(molybdopterin guanine dinucleotide)</name>
        <dbReference type="ChEBI" id="CHEBI:60539"/>
    </ligand>
</feature>
<feature type="binding site" evidence="1">
    <location>
        <begin position="721"/>
        <end position="730"/>
    </location>
    <ligand>
        <name>Mo-bis(molybdopterin guanine dinucleotide)</name>
        <dbReference type="ChEBI" id="CHEBI:60539"/>
    </ligand>
</feature>
<feature type="binding site" evidence="1">
    <location>
        <position position="797"/>
    </location>
    <ligand>
        <name>substrate</name>
    </ligand>
</feature>
<feature type="binding site" evidence="1">
    <location>
        <position position="805"/>
    </location>
    <ligand>
        <name>Mo-bis(molybdopterin guanine dinucleotide)</name>
        <dbReference type="ChEBI" id="CHEBI:60539"/>
    </ligand>
</feature>
<feature type="binding site" evidence="1">
    <location>
        <position position="822"/>
    </location>
    <ligand>
        <name>Mo-bis(molybdopterin guanine dinucleotide)</name>
        <dbReference type="ChEBI" id="CHEBI:60539"/>
    </ligand>
</feature>
<proteinExistence type="inferred from homology"/>
<evidence type="ECO:0000255" key="1">
    <source>
        <dbReference type="HAMAP-Rule" id="MF_01630"/>
    </source>
</evidence>
<gene>
    <name evidence="1" type="primary">napA</name>
    <name type="ordered locus">Dshi_3165</name>
</gene>
<organism>
    <name type="scientific">Dinoroseobacter shibae (strain DSM 16493 / NCIMB 14021 / DFL 12)</name>
    <dbReference type="NCBI Taxonomy" id="398580"/>
    <lineage>
        <taxon>Bacteria</taxon>
        <taxon>Pseudomonadati</taxon>
        <taxon>Pseudomonadota</taxon>
        <taxon>Alphaproteobacteria</taxon>
        <taxon>Rhodobacterales</taxon>
        <taxon>Roseobacteraceae</taxon>
        <taxon>Dinoroseobacter</taxon>
    </lineage>
</organism>
<comment type="function">
    <text evidence="1">Catalytic subunit of the periplasmic nitrate reductase complex NapAB. Receives electrons from NapB and catalyzes the reduction of nitrate to nitrite.</text>
</comment>
<comment type="catalytic activity">
    <reaction evidence="1">
        <text>2 Fe(II)-[cytochrome] + nitrate + 2 H(+) = 2 Fe(III)-[cytochrome] + nitrite + H2O</text>
        <dbReference type="Rhea" id="RHEA:12909"/>
        <dbReference type="Rhea" id="RHEA-COMP:11777"/>
        <dbReference type="Rhea" id="RHEA-COMP:11778"/>
        <dbReference type="ChEBI" id="CHEBI:15377"/>
        <dbReference type="ChEBI" id="CHEBI:15378"/>
        <dbReference type="ChEBI" id="CHEBI:16301"/>
        <dbReference type="ChEBI" id="CHEBI:17632"/>
        <dbReference type="ChEBI" id="CHEBI:29033"/>
        <dbReference type="ChEBI" id="CHEBI:29034"/>
        <dbReference type="EC" id="1.9.6.1"/>
    </reaction>
</comment>
<comment type="cofactor">
    <cofactor evidence="1">
        <name>[4Fe-4S] cluster</name>
        <dbReference type="ChEBI" id="CHEBI:49883"/>
    </cofactor>
    <text evidence="1">Binds 1 [4Fe-4S] cluster.</text>
</comment>
<comment type="cofactor">
    <cofactor evidence="1">
        <name>Mo-bis(molybdopterin guanine dinucleotide)</name>
        <dbReference type="ChEBI" id="CHEBI:60539"/>
    </cofactor>
    <text evidence="1">Binds 1 molybdenum-bis(molybdopterin guanine dinucleotide) (Mo-bis-MGD) cofactor per subunit.</text>
</comment>
<comment type="subunit">
    <text evidence="1">Component of the periplasmic nitrate reductase NapAB complex composed of NapA and NapB.</text>
</comment>
<comment type="subcellular location">
    <subcellularLocation>
        <location evidence="1">Periplasm</location>
    </subcellularLocation>
</comment>
<comment type="PTM">
    <text evidence="1">Predicted to be exported by the Tat system. The position of the signal peptide cleavage has not been experimentally proven.</text>
</comment>
<comment type="similarity">
    <text evidence="1">Belongs to the prokaryotic molybdopterin-containing oxidoreductase family. NasA/NapA/NarB subfamily.</text>
</comment>
<name>NAPA_DINSH</name>
<sequence>MTISDSRRTFLKASAAAATASAAGIPLANGTAAEAQAISTGIRWDKAACRFCGTGCSVLVGTKEGRVVATQGDPDAPVNRGLNCIKGYFLSKIMYGEDRLTMPLLRKTNGVYDKNGTFEPVSWDEAFDVMAQKWKEALAKKGPTSVGMFGSGQWTVWEGYAAAKLMKAGFRSNNIDPNARHCMASAVVGFMRTFGIDEPMGCYDDFEHADTFVLWGSNMAEMHPILWSRLTDTRLTKPGSEVHVLSTYEHRSFELADNGMVFAPQTDLAILNYIANYIISTGRVNEDFMSKHVNITKTATDIGYGLRDEHALQQEAENPNSGKLEPISFDEYAASVAEYTVDKVSELSGVPAAQLEKLAEQYADPNRKVMSLWTMGFNQHTRGSWVNSLMYNVHLLVGKISEPGNSPFSLTGQPSACGTAREVGTFAHRLPADMVVMNDAHRALTEKKWNLPEGTIPAKPGFHAVLQHRKLKDGDLNAYWVQCNNNMQAAPNMNEEGYPGYRNPENFITVSDPYPTVTTMSADLILPTAMWVEKEGAYGNAERRTQFWRQQVKAPGEAKSDLWQLMEFSKRFTIEEVWGEELLAKMPEHRGKTMYDVLFANGKVDKYPLSETAEGFDNDESEHFGYYVQKGLFEEYAGFGRGKAHDLASFETYHQSRGLRWPVVDGQETLYRFREGYDPYVPEGEGVRFYGHSDGKAKIIYAPYEPAPEVPDAEFDLWLCTGRVLEHWHSGSMTRRVPELHRAYPAAVVYMHPEDAKARGLRRGQEINISTRRGDMLSRVETRGRNKVPQGLVFVPWFDEGQLINQLTLDATCPLSKETDFKKCACKVERA</sequence>
<dbReference type="EC" id="1.9.6.1" evidence="1"/>
<dbReference type="EMBL" id="CP000830">
    <property type="protein sequence ID" value="ABV94898.1"/>
    <property type="molecule type" value="Genomic_DNA"/>
</dbReference>
<dbReference type="RefSeq" id="WP_012179825.1">
    <property type="nucleotide sequence ID" value="NC_009952.1"/>
</dbReference>
<dbReference type="SMR" id="A8LLY9"/>
<dbReference type="STRING" id="398580.Dshi_3165"/>
<dbReference type="KEGG" id="dsh:Dshi_3165"/>
<dbReference type="eggNOG" id="COG0243">
    <property type="taxonomic scope" value="Bacteria"/>
</dbReference>
<dbReference type="HOGENOM" id="CLU_000422_13_4_5"/>
<dbReference type="OrthoDB" id="9816402at2"/>
<dbReference type="Proteomes" id="UP000006833">
    <property type="component" value="Chromosome"/>
</dbReference>
<dbReference type="GO" id="GO:0016020">
    <property type="term" value="C:membrane"/>
    <property type="evidence" value="ECO:0007669"/>
    <property type="project" value="TreeGrafter"/>
</dbReference>
<dbReference type="GO" id="GO:0009325">
    <property type="term" value="C:nitrate reductase complex"/>
    <property type="evidence" value="ECO:0007669"/>
    <property type="project" value="TreeGrafter"/>
</dbReference>
<dbReference type="GO" id="GO:0042597">
    <property type="term" value="C:periplasmic space"/>
    <property type="evidence" value="ECO:0007669"/>
    <property type="project" value="UniProtKB-SubCell"/>
</dbReference>
<dbReference type="GO" id="GO:0051539">
    <property type="term" value="F:4 iron, 4 sulfur cluster binding"/>
    <property type="evidence" value="ECO:0007669"/>
    <property type="project" value="UniProtKB-KW"/>
</dbReference>
<dbReference type="GO" id="GO:0009055">
    <property type="term" value="F:electron transfer activity"/>
    <property type="evidence" value="ECO:0007669"/>
    <property type="project" value="UniProtKB-UniRule"/>
</dbReference>
<dbReference type="GO" id="GO:0005506">
    <property type="term" value="F:iron ion binding"/>
    <property type="evidence" value="ECO:0007669"/>
    <property type="project" value="UniProtKB-UniRule"/>
</dbReference>
<dbReference type="GO" id="GO:0030151">
    <property type="term" value="F:molybdenum ion binding"/>
    <property type="evidence" value="ECO:0007669"/>
    <property type="project" value="InterPro"/>
</dbReference>
<dbReference type="GO" id="GO:0043546">
    <property type="term" value="F:molybdopterin cofactor binding"/>
    <property type="evidence" value="ECO:0007669"/>
    <property type="project" value="InterPro"/>
</dbReference>
<dbReference type="GO" id="GO:0050140">
    <property type="term" value="F:nitrate reductase (cytochrome) activity"/>
    <property type="evidence" value="ECO:0007669"/>
    <property type="project" value="UniProtKB-EC"/>
</dbReference>
<dbReference type="GO" id="GO:0045333">
    <property type="term" value="P:cellular respiration"/>
    <property type="evidence" value="ECO:0007669"/>
    <property type="project" value="UniProtKB-ARBA"/>
</dbReference>
<dbReference type="GO" id="GO:0006777">
    <property type="term" value="P:Mo-molybdopterin cofactor biosynthetic process"/>
    <property type="evidence" value="ECO:0007669"/>
    <property type="project" value="UniProtKB-UniRule"/>
</dbReference>
<dbReference type="GO" id="GO:0042128">
    <property type="term" value="P:nitrate assimilation"/>
    <property type="evidence" value="ECO:0007669"/>
    <property type="project" value="UniProtKB-UniRule"/>
</dbReference>
<dbReference type="CDD" id="cd02791">
    <property type="entry name" value="MopB_CT_Nitrate-R-NapA-like"/>
    <property type="match status" value="1"/>
</dbReference>
<dbReference type="CDD" id="cd02754">
    <property type="entry name" value="MopB_Nitrate-R-NapA-like"/>
    <property type="match status" value="1"/>
</dbReference>
<dbReference type="FunFam" id="2.40.40.20:FF:000005">
    <property type="entry name" value="Periplasmic nitrate reductase"/>
    <property type="match status" value="1"/>
</dbReference>
<dbReference type="Gene3D" id="2.40.40.20">
    <property type="match status" value="1"/>
</dbReference>
<dbReference type="Gene3D" id="3.30.200.210">
    <property type="match status" value="1"/>
</dbReference>
<dbReference type="Gene3D" id="3.40.50.740">
    <property type="match status" value="1"/>
</dbReference>
<dbReference type="Gene3D" id="3.40.228.10">
    <property type="entry name" value="Dimethylsulfoxide Reductase, domain 2"/>
    <property type="match status" value="1"/>
</dbReference>
<dbReference type="HAMAP" id="MF_01630">
    <property type="entry name" value="Nitrate_reduct_NapA"/>
    <property type="match status" value="1"/>
</dbReference>
<dbReference type="InterPro" id="IPR009010">
    <property type="entry name" value="Asp_de-COase-like_dom_sf"/>
</dbReference>
<dbReference type="InterPro" id="IPR041957">
    <property type="entry name" value="CT_Nitrate-R-NapA-like"/>
</dbReference>
<dbReference type="InterPro" id="IPR006657">
    <property type="entry name" value="MoPterin_dinucl-bd_dom"/>
</dbReference>
<dbReference type="InterPro" id="IPR006656">
    <property type="entry name" value="Mopterin_OxRdtase"/>
</dbReference>
<dbReference type="InterPro" id="IPR006963">
    <property type="entry name" value="Mopterin_OxRdtase_4Fe-4S_dom"/>
</dbReference>
<dbReference type="InterPro" id="IPR027467">
    <property type="entry name" value="MopterinOxRdtase_cofactor_BS"/>
</dbReference>
<dbReference type="InterPro" id="IPR010051">
    <property type="entry name" value="Periplasm_NO3_reductase_lsu"/>
</dbReference>
<dbReference type="InterPro" id="IPR050123">
    <property type="entry name" value="Prok_molybdopt-oxidoreductase"/>
</dbReference>
<dbReference type="InterPro" id="IPR006311">
    <property type="entry name" value="TAT_signal"/>
</dbReference>
<dbReference type="NCBIfam" id="TIGR01706">
    <property type="entry name" value="NAPA"/>
    <property type="match status" value="1"/>
</dbReference>
<dbReference type="NCBIfam" id="NF010055">
    <property type="entry name" value="PRK13532.1"/>
    <property type="match status" value="1"/>
</dbReference>
<dbReference type="PANTHER" id="PTHR43105:SF11">
    <property type="entry name" value="PERIPLASMIC NITRATE REDUCTASE"/>
    <property type="match status" value="1"/>
</dbReference>
<dbReference type="PANTHER" id="PTHR43105">
    <property type="entry name" value="RESPIRATORY NITRATE REDUCTASE"/>
    <property type="match status" value="1"/>
</dbReference>
<dbReference type="Pfam" id="PF04879">
    <property type="entry name" value="Molybdop_Fe4S4"/>
    <property type="match status" value="1"/>
</dbReference>
<dbReference type="Pfam" id="PF00384">
    <property type="entry name" value="Molybdopterin"/>
    <property type="match status" value="1"/>
</dbReference>
<dbReference type="Pfam" id="PF01568">
    <property type="entry name" value="Molydop_binding"/>
    <property type="match status" value="1"/>
</dbReference>
<dbReference type="SMART" id="SM00926">
    <property type="entry name" value="Molybdop_Fe4S4"/>
    <property type="match status" value="1"/>
</dbReference>
<dbReference type="SUPFAM" id="SSF50692">
    <property type="entry name" value="ADC-like"/>
    <property type="match status" value="1"/>
</dbReference>
<dbReference type="SUPFAM" id="SSF53706">
    <property type="entry name" value="Formate dehydrogenase/DMSO reductase, domains 1-3"/>
    <property type="match status" value="1"/>
</dbReference>
<dbReference type="PROSITE" id="PS51669">
    <property type="entry name" value="4FE4S_MOW_BIS_MGD"/>
    <property type="match status" value="1"/>
</dbReference>
<dbReference type="PROSITE" id="PS00551">
    <property type="entry name" value="MOLYBDOPTERIN_PROK_1"/>
    <property type="match status" value="1"/>
</dbReference>
<dbReference type="PROSITE" id="PS51318">
    <property type="entry name" value="TAT"/>
    <property type="match status" value="1"/>
</dbReference>
<keyword id="KW-0004">4Fe-4S</keyword>
<keyword id="KW-0249">Electron transport</keyword>
<keyword id="KW-0408">Iron</keyword>
<keyword id="KW-0411">Iron-sulfur</keyword>
<keyword id="KW-0479">Metal-binding</keyword>
<keyword id="KW-0500">Molybdenum</keyword>
<keyword id="KW-0534">Nitrate assimilation</keyword>
<keyword id="KW-0560">Oxidoreductase</keyword>
<keyword id="KW-0574">Periplasm</keyword>
<keyword id="KW-1185">Reference proteome</keyword>
<keyword id="KW-0732">Signal</keyword>
<keyword id="KW-0813">Transport</keyword>
<protein>
    <recommendedName>
        <fullName evidence="1">Periplasmic nitrate reductase</fullName>
        <ecNumber evidence="1">1.9.6.1</ecNumber>
    </recommendedName>
</protein>